<comment type="function">
    <text evidence="1">Functions in the N-end rule pathway of protein degradation where it conjugates Leu, Phe and, less efficiently, Met from aminoacyl-tRNAs to the N-termini of proteins containing an N-terminal arginine or lysine.</text>
</comment>
<comment type="catalytic activity">
    <reaction evidence="1">
        <text>N-terminal L-lysyl-[protein] + L-leucyl-tRNA(Leu) = N-terminal L-leucyl-L-lysyl-[protein] + tRNA(Leu) + H(+)</text>
        <dbReference type="Rhea" id="RHEA:12340"/>
        <dbReference type="Rhea" id="RHEA-COMP:9613"/>
        <dbReference type="Rhea" id="RHEA-COMP:9622"/>
        <dbReference type="Rhea" id="RHEA-COMP:12670"/>
        <dbReference type="Rhea" id="RHEA-COMP:12671"/>
        <dbReference type="ChEBI" id="CHEBI:15378"/>
        <dbReference type="ChEBI" id="CHEBI:65249"/>
        <dbReference type="ChEBI" id="CHEBI:78442"/>
        <dbReference type="ChEBI" id="CHEBI:78494"/>
        <dbReference type="ChEBI" id="CHEBI:133043"/>
        <dbReference type="EC" id="2.3.2.6"/>
    </reaction>
</comment>
<comment type="catalytic activity">
    <reaction evidence="1">
        <text>N-terminal L-arginyl-[protein] + L-leucyl-tRNA(Leu) = N-terminal L-leucyl-L-arginyl-[protein] + tRNA(Leu) + H(+)</text>
        <dbReference type="Rhea" id="RHEA:50416"/>
        <dbReference type="Rhea" id="RHEA-COMP:9613"/>
        <dbReference type="Rhea" id="RHEA-COMP:9622"/>
        <dbReference type="Rhea" id="RHEA-COMP:12672"/>
        <dbReference type="Rhea" id="RHEA-COMP:12673"/>
        <dbReference type="ChEBI" id="CHEBI:15378"/>
        <dbReference type="ChEBI" id="CHEBI:64719"/>
        <dbReference type="ChEBI" id="CHEBI:78442"/>
        <dbReference type="ChEBI" id="CHEBI:78494"/>
        <dbReference type="ChEBI" id="CHEBI:133044"/>
        <dbReference type="EC" id="2.3.2.6"/>
    </reaction>
</comment>
<comment type="catalytic activity">
    <reaction evidence="1">
        <text>L-phenylalanyl-tRNA(Phe) + an N-terminal L-alpha-aminoacyl-[protein] = an N-terminal L-phenylalanyl-L-alpha-aminoacyl-[protein] + tRNA(Phe)</text>
        <dbReference type="Rhea" id="RHEA:43632"/>
        <dbReference type="Rhea" id="RHEA-COMP:9668"/>
        <dbReference type="Rhea" id="RHEA-COMP:9699"/>
        <dbReference type="Rhea" id="RHEA-COMP:10636"/>
        <dbReference type="Rhea" id="RHEA-COMP:10637"/>
        <dbReference type="ChEBI" id="CHEBI:78442"/>
        <dbReference type="ChEBI" id="CHEBI:78531"/>
        <dbReference type="ChEBI" id="CHEBI:78597"/>
        <dbReference type="ChEBI" id="CHEBI:83561"/>
        <dbReference type="EC" id="2.3.2.6"/>
    </reaction>
</comment>
<comment type="subcellular location">
    <subcellularLocation>
        <location evidence="1">Cytoplasm</location>
    </subcellularLocation>
</comment>
<comment type="similarity">
    <text evidence="1">Belongs to the L/F-transferase family.</text>
</comment>
<reference key="1">
    <citation type="submission" date="2005-10" db="EMBL/GenBank/DDBJ databases">
        <title>Complete sequence of chromosome 1 of Burkholderia sp. 383.</title>
        <authorList>
            <consortium name="US DOE Joint Genome Institute"/>
            <person name="Copeland A."/>
            <person name="Lucas S."/>
            <person name="Lapidus A."/>
            <person name="Barry K."/>
            <person name="Detter J.C."/>
            <person name="Glavina T."/>
            <person name="Hammon N."/>
            <person name="Israni S."/>
            <person name="Pitluck S."/>
            <person name="Chain P."/>
            <person name="Malfatti S."/>
            <person name="Shin M."/>
            <person name="Vergez L."/>
            <person name="Schmutz J."/>
            <person name="Larimer F."/>
            <person name="Land M."/>
            <person name="Kyrpides N."/>
            <person name="Lykidis A."/>
            <person name="Richardson P."/>
        </authorList>
    </citation>
    <scope>NUCLEOTIDE SEQUENCE [LARGE SCALE GENOMIC DNA]</scope>
    <source>
        <strain>ATCC 17760 / DSM 23089 / LMG 22485 / NCIMB 9086 / R18194 / 383</strain>
    </source>
</reference>
<organism>
    <name type="scientific">Burkholderia lata (strain ATCC 17760 / DSM 23089 / LMG 22485 / NCIMB 9086 / R18194 / 383)</name>
    <dbReference type="NCBI Taxonomy" id="482957"/>
    <lineage>
        <taxon>Bacteria</taxon>
        <taxon>Pseudomonadati</taxon>
        <taxon>Pseudomonadota</taxon>
        <taxon>Betaproteobacteria</taxon>
        <taxon>Burkholderiales</taxon>
        <taxon>Burkholderiaceae</taxon>
        <taxon>Burkholderia</taxon>
        <taxon>Burkholderia cepacia complex</taxon>
    </lineage>
</organism>
<dbReference type="EC" id="2.3.2.6" evidence="1"/>
<dbReference type="EMBL" id="CP000151">
    <property type="protein sequence ID" value="ABB08293.1"/>
    <property type="molecule type" value="Genomic_DNA"/>
</dbReference>
<dbReference type="RefSeq" id="WP_011351854.1">
    <property type="nucleotide sequence ID" value="NC_007510.1"/>
</dbReference>
<dbReference type="SMR" id="Q39GX3"/>
<dbReference type="GeneID" id="45094597"/>
<dbReference type="KEGG" id="bur:Bcep18194_A4698"/>
<dbReference type="PATRIC" id="fig|482957.22.peg.1612"/>
<dbReference type="HOGENOM" id="CLU_075045_0_0_4"/>
<dbReference type="Proteomes" id="UP000002705">
    <property type="component" value="Chromosome 1"/>
</dbReference>
<dbReference type="GO" id="GO:0005737">
    <property type="term" value="C:cytoplasm"/>
    <property type="evidence" value="ECO:0007669"/>
    <property type="project" value="UniProtKB-SubCell"/>
</dbReference>
<dbReference type="GO" id="GO:0008914">
    <property type="term" value="F:leucyl-tRNA--protein transferase activity"/>
    <property type="evidence" value="ECO:0007669"/>
    <property type="project" value="UniProtKB-UniRule"/>
</dbReference>
<dbReference type="GO" id="GO:0030163">
    <property type="term" value="P:protein catabolic process"/>
    <property type="evidence" value="ECO:0007669"/>
    <property type="project" value="UniProtKB-UniRule"/>
</dbReference>
<dbReference type="Gene3D" id="3.40.630.70">
    <property type="entry name" value="Leucyl/phenylalanyl-tRNA-protein transferase, C-terminal domain"/>
    <property type="match status" value="1"/>
</dbReference>
<dbReference type="Gene3D" id="3.30.70.3550">
    <property type="entry name" value="Leucyl/phenylalanyl-tRNA-protein transferase, N-terminal domain"/>
    <property type="match status" value="1"/>
</dbReference>
<dbReference type="HAMAP" id="MF_00688">
    <property type="entry name" value="Leu_Phe_trans"/>
    <property type="match status" value="1"/>
</dbReference>
<dbReference type="InterPro" id="IPR016181">
    <property type="entry name" value="Acyl_CoA_acyltransferase"/>
</dbReference>
<dbReference type="InterPro" id="IPR004616">
    <property type="entry name" value="Leu/Phe-tRNA_Trfase"/>
</dbReference>
<dbReference type="InterPro" id="IPR042203">
    <property type="entry name" value="Leu/Phe-tRNA_Trfase_C"/>
</dbReference>
<dbReference type="InterPro" id="IPR042221">
    <property type="entry name" value="Leu/Phe-tRNA_Trfase_N"/>
</dbReference>
<dbReference type="NCBIfam" id="TIGR00667">
    <property type="entry name" value="aat"/>
    <property type="match status" value="1"/>
</dbReference>
<dbReference type="PANTHER" id="PTHR30098">
    <property type="entry name" value="LEUCYL/PHENYLALANYL-TRNA--PROTEIN TRANSFERASE"/>
    <property type="match status" value="1"/>
</dbReference>
<dbReference type="PANTHER" id="PTHR30098:SF2">
    <property type="entry name" value="LEUCYL_PHENYLALANYL-TRNA--PROTEIN TRANSFERASE"/>
    <property type="match status" value="1"/>
</dbReference>
<dbReference type="Pfam" id="PF03588">
    <property type="entry name" value="Leu_Phe_trans"/>
    <property type="match status" value="1"/>
</dbReference>
<dbReference type="SUPFAM" id="SSF55729">
    <property type="entry name" value="Acyl-CoA N-acyltransferases (Nat)"/>
    <property type="match status" value="1"/>
</dbReference>
<proteinExistence type="inferred from homology"/>
<name>LFTR_BURL3</name>
<evidence type="ECO:0000255" key="1">
    <source>
        <dbReference type="HAMAP-Rule" id="MF_00688"/>
    </source>
</evidence>
<protein>
    <recommendedName>
        <fullName evidence="1">Leucyl/phenylalanyl-tRNA--protein transferase</fullName>
        <ecNumber evidence="1">2.3.2.6</ecNumber>
    </recommendedName>
    <alternativeName>
        <fullName evidence="1">L/F-transferase</fullName>
    </alternativeName>
    <alternativeName>
        <fullName evidence="1">Leucyltransferase</fullName>
    </alternativeName>
    <alternativeName>
        <fullName evidence="1">Phenyalanyltransferase</fullName>
    </alternativeName>
</protein>
<sequence>MVPWLGPDDPFPPIERALGPATGAPGLLAASADLLPSRLIDAYLRGIFPWYSDGQPVLWWSPDPRMILVPAEFKVSPSLRKTLKRVLREPEWEVRVDHDFPGVMRACAQAPRRGQRGTWITAEIIDAYTSLYRSGNAHSIETWHDGRRVGGLYGVSFGRMFFGESMYADATDASKIALATLVAHLREQGLEMIDCQQNTSHLASLGGREIARKAFVAHVRSAVAEPPIPWQFDKRVLAALTGRAEAAAPSGIER</sequence>
<feature type="chain" id="PRO_0000258050" description="Leucyl/phenylalanyl-tRNA--protein transferase">
    <location>
        <begin position="1"/>
        <end position="254"/>
    </location>
</feature>
<gene>
    <name evidence="1" type="primary">aat</name>
    <name type="ordered locus">Bcep18194_A4698</name>
</gene>
<keyword id="KW-0012">Acyltransferase</keyword>
<keyword id="KW-0963">Cytoplasm</keyword>
<keyword id="KW-0808">Transferase</keyword>
<accession>Q39GX3</accession>